<proteinExistence type="evidence at protein level"/>
<keyword id="KW-0903">Direct protein sequencing</keyword>
<sequence length="12" mass="1286">YGLAGDHVLDAR</sequence>
<accession>P86059</accession>
<evidence type="ECO:0000305" key="1"/>
<protein>
    <recommendedName>
        <fullName>Unknown protein 1</fullName>
    </recommendedName>
</protein>
<reference evidence="1" key="1">
    <citation type="submission" date="2008-07" db="UniProtKB">
        <authorList>
            <person name="Sabater Jara A.B."/>
            <person name="Almagro L."/>
            <person name="Ferrer M.A."/>
            <person name="Pedreno M.A."/>
        </authorList>
    </citation>
    <scope>PROTEIN SEQUENCE</scope>
</reference>
<organism>
    <name type="scientific">Daucus carota</name>
    <name type="common">Wild carrot</name>
    <dbReference type="NCBI Taxonomy" id="4039"/>
    <lineage>
        <taxon>Eukaryota</taxon>
        <taxon>Viridiplantae</taxon>
        <taxon>Streptophyta</taxon>
        <taxon>Embryophyta</taxon>
        <taxon>Tracheophyta</taxon>
        <taxon>Spermatophyta</taxon>
        <taxon>Magnoliopsida</taxon>
        <taxon>eudicotyledons</taxon>
        <taxon>Gunneridae</taxon>
        <taxon>Pentapetalae</taxon>
        <taxon>asterids</taxon>
        <taxon>campanulids</taxon>
        <taxon>Apiales</taxon>
        <taxon>Apiaceae</taxon>
        <taxon>Apioideae</taxon>
        <taxon>Scandiceae</taxon>
        <taxon>Daucinae</taxon>
        <taxon>Daucus</taxon>
        <taxon>Daucus sect. Daucus</taxon>
    </lineage>
</organism>
<name>UP01_DAUCA</name>
<feature type="chain" id="PRO_0000355605" description="Unknown protein 1">
    <location>
        <begin position="1" status="less than"/>
        <end position="12" status="greater than"/>
    </location>
</feature>
<feature type="unsure residue" description="L or I">
    <location>
        <position position="3"/>
    </location>
</feature>
<feature type="unsure residue" description="L or I">
    <location>
        <position position="9"/>
    </location>
</feature>
<feature type="non-terminal residue">
    <location>
        <position position="1"/>
    </location>
</feature>
<feature type="non-terminal residue">
    <location>
        <position position="12"/>
    </location>
</feature>